<feature type="chain" id="PRO_1000009766" description="dCTP deaminase">
    <location>
        <begin position="1"/>
        <end position="195"/>
    </location>
</feature>
<feature type="region of interest" description="Disordered" evidence="2">
    <location>
        <begin position="159"/>
        <end position="195"/>
    </location>
</feature>
<feature type="compositionally biased region" description="Basic and acidic residues" evidence="2">
    <location>
        <begin position="160"/>
        <end position="172"/>
    </location>
</feature>
<feature type="compositionally biased region" description="Polar residues" evidence="2">
    <location>
        <begin position="174"/>
        <end position="184"/>
    </location>
</feature>
<feature type="compositionally biased region" description="Basic and acidic residues" evidence="2">
    <location>
        <begin position="186"/>
        <end position="195"/>
    </location>
</feature>
<feature type="active site" description="Proton donor/acceptor" evidence="1">
    <location>
        <position position="133"/>
    </location>
</feature>
<feature type="binding site" evidence="1">
    <location>
        <begin position="105"/>
        <end position="110"/>
    </location>
    <ligand>
        <name>dCTP</name>
        <dbReference type="ChEBI" id="CHEBI:61481"/>
    </ligand>
</feature>
<feature type="binding site" evidence="1">
    <location>
        <position position="123"/>
    </location>
    <ligand>
        <name>dCTP</name>
        <dbReference type="ChEBI" id="CHEBI:61481"/>
    </ligand>
</feature>
<feature type="binding site" evidence="1">
    <location>
        <begin position="131"/>
        <end position="133"/>
    </location>
    <ligand>
        <name>dCTP</name>
        <dbReference type="ChEBI" id="CHEBI:61481"/>
    </ligand>
</feature>
<feature type="binding site" evidence="1">
    <location>
        <position position="152"/>
    </location>
    <ligand>
        <name>dCTP</name>
        <dbReference type="ChEBI" id="CHEBI:61481"/>
    </ligand>
</feature>
<feature type="binding site" evidence="1">
    <location>
        <position position="166"/>
    </location>
    <ligand>
        <name>dCTP</name>
        <dbReference type="ChEBI" id="CHEBI:61481"/>
    </ligand>
</feature>
<feature type="binding site" evidence="1">
    <location>
        <position position="173"/>
    </location>
    <ligand>
        <name>dCTP</name>
        <dbReference type="ChEBI" id="CHEBI:61481"/>
    </ligand>
</feature>
<feature type="binding site" evidence="1">
    <location>
        <position position="177"/>
    </location>
    <ligand>
        <name>dCTP</name>
        <dbReference type="ChEBI" id="CHEBI:61481"/>
    </ligand>
</feature>
<dbReference type="EC" id="3.5.4.13" evidence="1"/>
<dbReference type="EMBL" id="CR936257">
    <property type="protein sequence ID" value="CAI50674.1"/>
    <property type="molecule type" value="Genomic_DNA"/>
</dbReference>
<dbReference type="RefSeq" id="WP_011324284.1">
    <property type="nucleotide sequence ID" value="NC_007426.1"/>
</dbReference>
<dbReference type="SMR" id="Q3IMI4"/>
<dbReference type="STRING" id="348780.NP_5166A"/>
<dbReference type="EnsemblBacteria" id="CAI50674">
    <property type="protein sequence ID" value="CAI50674"/>
    <property type="gene ID" value="NP_5166A"/>
</dbReference>
<dbReference type="GeneID" id="3702659"/>
<dbReference type="KEGG" id="nph:NP_5166A"/>
<dbReference type="eggNOG" id="arCOG04048">
    <property type="taxonomic scope" value="Archaea"/>
</dbReference>
<dbReference type="HOGENOM" id="CLU_087476_2_1_2"/>
<dbReference type="OrthoDB" id="33242at2157"/>
<dbReference type="UniPathway" id="UPA00610">
    <property type="reaction ID" value="UER00665"/>
</dbReference>
<dbReference type="Proteomes" id="UP000002698">
    <property type="component" value="Chromosome"/>
</dbReference>
<dbReference type="GO" id="GO:0008829">
    <property type="term" value="F:dCTP deaminase activity"/>
    <property type="evidence" value="ECO:0007669"/>
    <property type="project" value="UniProtKB-UniRule"/>
</dbReference>
<dbReference type="GO" id="GO:0000166">
    <property type="term" value="F:nucleotide binding"/>
    <property type="evidence" value="ECO:0007669"/>
    <property type="project" value="UniProtKB-KW"/>
</dbReference>
<dbReference type="GO" id="GO:0006226">
    <property type="term" value="P:dUMP biosynthetic process"/>
    <property type="evidence" value="ECO:0007669"/>
    <property type="project" value="UniProtKB-UniPathway"/>
</dbReference>
<dbReference type="GO" id="GO:0006229">
    <property type="term" value="P:dUTP biosynthetic process"/>
    <property type="evidence" value="ECO:0007669"/>
    <property type="project" value="UniProtKB-UniRule"/>
</dbReference>
<dbReference type="GO" id="GO:0015949">
    <property type="term" value="P:nucleobase-containing small molecule interconversion"/>
    <property type="evidence" value="ECO:0007669"/>
    <property type="project" value="TreeGrafter"/>
</dbReference>
<dbReference type="CDD" id="cd07557">
    <property type="entry name" value="trimeric_dUTPase"/>
    <property type="match status" value="1"/>
</dbReference>
<dbReference type="FunFam" id="2.70.40.10:FF:000005">
    <property type="entry name" value="dCTP deaminase, dUMP-forming"/>
    <property type="match status" value="1"/>
</dbReference>
<dbReference type="Gene3D" id="2.70.40.10">
    <property type="match status" value="1"/>
</dbReference>
<dbReference type="HAMAP" id="MF_00146">
    <property type="entry name" value="dCTP_deaminase"/>
    <property type="match status" value="1"/>
</dbReference>
<dbReference type="InterPro" id="IPR011962">
    <property type="entry name" value="dCTP_deaminase"/>
</dbReference>
<dbReference type="InterPro" id="IPR036157">
    <property type="entry name" value="dUTPase-like_sf"/>
</dbReference>
<dbReference type="InterPro" id="IPR033704">
    <property type="entry name" value="dUTPase_trimeric"/>
</dbReference>
<dbReference type="NCBIfam" id="TIGR02274">
    <property type="entry name" value="dCTP_deam"/>
    <property type="match status" value="1"/>
</dbReference>
<dbReference type="PANTHER" id="PTHR42680">
    <property type="entry name" value="DCTP DEAMINASE"/>
    <property type="match status" value="1"/>
</dbReference>
<dbReference type="PANTHER" id="PTHR42680:SF3">
    <property type="entry name" value="DCTP DEAMINASE"/>
    <property type="match status" value="1"/>
</dbReference>
<dbReference type="Pfam" id="PF22769">
    <property type="entry name" value="DCD"/>
    <property type="match status" value="1"/>
</dbReference>
<dbReference type="SUPFAM" id="SSF51283">
    <property type="entry name" value="dUTPase-like"/>
    <property type="match status" value="1"/>
</dbReference>
<evidence type="ECO:0000255" key="1">
    <source>
        <dbReference type="HAMAP-Rule" id="MF_00146"/>
    </source>
</evidence>
<evidence type="ECO:0000256" key="2">
    <source>
        <dbReference type="SAM" id="MobiDB-lite"/>
    </source>
</evidence>
<protein>
    <recommendedName>
        <fullName evidence="1">dCTP deaminase</fullName>
        <ecNumber evidence="1">3.5.4.13</ecNumber>
    </recommendedName>
    <alternativeName>
        <fullName evidence="1">Deoxycytidine triphosphate deaminase</fullName>
    </alternativeName>
</protein>
<sequence length="195" mass="21446">MILSDADIRRRLDEGDLAIEPLDDPELQVQPASVDLRLGREFLEFQRANISCIHPTSEREVDEYVDETYVEEGEEFVLHPGDFVLGTTKERVEIPPDLIAHVEGRSSLGRLAIVVHATAGLCDPGYQGQITLELSNLGTAPVALSPGMRISQLTFTELKSPAERPYGAERGSKYQGQTGPQASRIQGDREFGGDQ</sequence>
<accession>Q3IMI4</accession>
<organism>
    <name type="scientific">Natronomonas pharaonis (strain ATCC 35678 / DSM 2160 / CIP 103997 / JCM 8858 / NBRC 14720 / NCIMB 2260 / Gabara)</name>
    <name type="common">Halobacterium pharaonis</name>
    <dbReference type="NCBI Taxonomy" id="348780"/>
    <lineage>
        <taxon>Archaea</taxon>
        <taxon>Methanobacteriati</taxon>
        <taxon>Methanobacteriota</taxon>
        <taxon>Stenosarchaea group</taxon>
        <taxon>Halobacteria</taxon>
        <taxon>Halobacteriales</taxon>
        <taxon>Haloarculaceae</taxon>
        <taxon>Natronomonas</taxon>
    </lineage>
</organism>
<gene>
    <name evidence="1" type="primary">dcd</name>
    <name type="ordered locus">NP_5166A</name>
</gene>
<comment type="function">
    <text evidence="1">Catalyzes the deamination of dCTP to dUTP.</text>
</comment>
<comment type="catalytic activity">
    <reaction evidence="1">
        <text>dCTP + H2O + H(+) = dUTP + NH4(+)</text>
        <dbReference type="Rhea" id="RHEA:22680"/>
        <dbReference type="ChEBI" id="CHEBI:15377"/>
        <dbReference type="ChEBI" id="CHEBI:15378"/>
        <dbReference type="ChEBI" id="CHEBI:28938"/>
        <dbReference type="ChEBI" id="CHEBI:61481"/>
        <dbReference type="ChEBI" id="CHEBI:61555"/>
        <dbReference type="EC" id="3.5.4.13"/>
    </reaction>
</comment>
<comment type="pathway">
    <text evidence="1">Pyrimidine metabolism; dUMP biosynthesis; dUMP from dCTP (dUTP route): step 1/2.</text>
</comment>
<comment type="subunit">
    <text evidence="1">Homotrimer.</text>
</comment>
<comment type="similarity">
    <text evidence="1">Belongs to the dCTP deaminase family.</text>
</comment>
<proteinExistence type="inferred from homology"/>
<reference key="1">
    <citation type="journal article" date="2005" name="Genome Res.">
        <title>Living with two extremes: conclusions from the genome sequence of Natronomonas pharaonis.</title>
        <authorList>
            <person name="Falb M."/>
            <person name="Pfeiffer F."/>
            <person name="Palm P."/>
            <person name="Rodewald K."/>
            <person name="Hickmann V."/>
            <person name="Tittor J."/>
            <person name="Oesterhelt D."/>
        </authorList>
    </citation>
    <scope>NUCLEOTIDE SEQUENCE [LARGE SCALE GENOMIC DNA]</scope>
    <source>
        <strain>ATCC 35678 / DSM 2160 / CIP 103997 / JCM 8858 / NBRC 14720 / NCIMB 2260 / Gabara</strain>
    </source>
</reference>
<name>DCD_NATPD</name>
<keyword id="KW-0378">Hydrolase</keyword>
<keyword id="KW-0546">Nucleotide metabolism</keyword>
<keyword id="KW-0547">Nucleotide-binding</keyword>
<keyword id="KW-1185">Reference proteome</keyword>